<dbReference type="EMBL" id="CP001598">
    <property type="protein sequence ID" value="ACQ50517.1"/>
    <property type="molecule type" value="Genomic_DNA"/>
</dbReference>
<dbReference type="RefSeq" id="WP_000527987.1">
    <property type="nucleotide sequence ID" value="NC_012659.1"/>
</dbReference>
<dbReference type="GeneID" id="93007574"/>
<dbReference type="KEGG" id="bai:BAA_3698"/>
<dbReference type="HOGENOM" id="CLU_216714_0_0_9"/>
<dbReference type="GO" id="GO:0042601">
    <property type="term" value="C:endospore-forming forespore"/>
    <property type="evidence" value="ECO:0007669"/>
    <property type="project" value="InterPro"/>
</dbReference>
<dbReference type="GO" id="GO:0030436">
    <property type="term" value="P:asexual sporulation"/>
    <property type="evidence" value="ECO:0007669"/>
    <property type="project" value="UniProtKB-UniRule"/>
</dbReference>
<dbReference type="GO" id="GO:0030435">
    <property type="term" value="P:sporulation resulting in formation of a cellular spore"/>
    <property type="evidence" value="ECO:0007669"/>
    <property type="project" value="UniProtKB-KW"/>
</dbReference>
<dbReference type="HAMAP" id="MF_01505">
    <property type="entry name" value="SspN"/>
    <property type="match status" value="1"/>
</dbReference>
<dbReference type="InterPro" id="IPR012612">
    <property type="entry name" value="SASP_SspN"/>
</dbReference>
<dbReference type="NCBIfam" id="NF006904">
    <property type="entry name" value="PRK09398.1"/>
    <property type="match status" value="1"/>
</dbReference>
<dbReference type="Pfam" id="PF08177">
    <property type="entry name" value="SspN"/>
    <property type="match status" value="1"/>
</dbReference>
<accession>C3P450</accession>
<comment type="subcellular location">
    <subcellularLocation>
        <location evidence="1">Spore core</location>
    </subcellularLocation>
</comment>
<comment type="induction">
    <text evidence="1">Expressed only in the forespore compartment of sporulating cells.</text>
</comment>
<comment type="similarity">
    <text evidence="1">Belongs to the SspN family.</text>
</comment>
<feature type="chain" id="PRO_1000185026" description="Small, acid-soluble spore protein N">
    <location>
        <begin position="1"/>
        <end position="44"/>
    </location>
</feature>
<feature type="region of interest" description="Disordered" evidence="2">
    <location>
        <begin position="1"/>
        <end position="44"/>
    </location>
</feature>
<keyword id="KW-0749">Sporulation</keyword>
<sequence length="44" mass="4681">MGNPKKNSKDFAPNHIGTQSKKAGGNKGKQMQDQTGKQPIVDNG</sequence>
<organism>
    <name type="scientific">Bacillus anthracis (strain A0248)</name>
    <dbReference type="NCBI Taxonomy" id="592021"/>
    <lineage>
        <taxon>Bacteria</taxon>
        <taxon>Bacillati</taxon>
        <taxon>Bacillota</taxon>
        <taxon>Bacilli</taxon>
        <taxon>Bacillales</taxon>
        <taxon>Bacillaceae</taxon>
        <taxon>Bacillus</taxon>
        <taxon>Bacillus cereus group</taxon>
    </lineage>
</organism>
<reference key="1">
    <citation type="submission" date="2009-04" db="EMBL/GenBank/DDBJ databases">
        <title>Genome sequence of Bacillus anthracis A0248.</title>
        <authorList>
            <person name="Dodson R.J."/>
            <person name="Munk A.C."/>
            <person name="Bruce D."/>
            <person name="Detter C."/>
            <person name="Tapia R."/>
            <person name="Sutton G."/>
            <person name="Sims D."/>
            <person name="Brettin T."/>
        </authorList>
    </citation>
    <scope>NUCLEOTIDE SEQUENCE [LARGE SCALE GENOMIC DNA]</scope>
    <source>
        <strain>A0248</strain>
    </source>
</reference>
<gene>
    <name evidence="1" type="primary">sspN</name>
    <name type="ordered locus">BAA_3698</name>
</gene>
<protein>
    <recommendedName>
        <fullName evidence="1">Small, acid-soluble spore protein N</fullName>
        <shortName evidence="1">SASP N</shortName>
    </recommendedName>
</protein>
<name>SSPN_BACAA</name>
<evidence type="ECO:0000255" key="1">
    <source>
        <dbReference type="HAMAP-Rule" id="MF_01505"/>
    </source>
</evidence>
<evidence type="ECO:0000256" key="2">
    <source>
        <dbReference type="SAM" id="MobiDB-lite"/>
    </source>
</evidence>
<proteinExistence type="inferred from homology"/>